<protein>
    <recommendedName>
        <fullName evidence="1">Phosphomethylpyrimidine synthase</fullName>
        <ecNumber evidence="1">4.1.99.17</ecNumber>
    </recommendedName>
    <alternativeName>
        <fullName evidence="1">Hydroxymethylpyrimidine phosphate synthase</fullName>
        <shortName evidence="1">HMP-P synthase</shortName>
        <shortName evidence="1">HMP-phosphate synthase</shortName>
        <shortName evidence="1">HMPP synthase</shortName>
    </alternativeName>
    <alternativeName>
        <fullName evidence="1">Thiamine biosynthesis protein ThiC</fullName>
    </alternativeName>
</protein>
<evidence type="ECO:0000255" key="1">
    <source>
        <dbReference type="HAMAP-Rule" id="MF_00089"/>
    </source>
</evidence>
<accession>A4G002</accession>
<name>THIC_METM5</name>
<sequence length="426" mass="47010">MTQMTDAKSGITTEEMKFVAKEEGMDVETFKNLIAKGYVVIPKNVNRNTKPVGIGDNLRTKVNVNLGTSPDFIDIACELKKVEISNKYGADAIMDLSTGGNLPEIRKEIIKNTNLPIGTVPIYEVGADAKAKYGRVIDMDEDLIFNVIERQAKEGVDFMTLHCGITKQTVSALNNDPRKMGVVSRGGAFLTAYIMYHDKENPLYKEFDYLLELLKEHDVTLSLGDGMRPGCLQDNTDRAQIQELITLGELVDKCREKGVQVMVEGPGHVPYNNIEANMKIQKTLCKNAPFYVLGPIVTDLAPGYDHITAAIGGTLAAVSGANFLCYVTPAEHVRLMKEDDVKEGLIASKIAAQAADVAKGHSIAWKLEKEMADARMKHDWEKQFEIALDSDKPGKMREEIPSKDEKACSVCGDYCALLMVEELGKR</sequence>
<proteinExistence type="inferred from homology"/>
<comment type="function">
    <text evidence="1">Catalyzes the synthesis of the hydroxymethylpyrimidine phosphate (HMP-P) moiety of thiamine from aminoimidazole ribotide (AIR) in a radical S-adenosyl-L-methionine (SAM)-dependent reaction.</text>
</comment>
<comment type="catalytic activity">
    <reaction evidence="1">
        <text>5-amino-1-(5-phospho-beta-D-ribosyl)imidazole + S-adenosyl-L-methionine = 4-amino-2-methyl-5-(phosphooxymethyl)pyrimidine + CO + 5'-deoxyadenosine + formate + L-methionine + 3 H(+)</text>
        <dbReference type="Rhea" id="RHEA:24840"/>
        <dbReference type="ChEBI" id="CHEBI:15378"/>
        <dbReference type="ChEBI" id="CHEBI:15740"/>
        <dbReference type="ChEBI" id="CHEBI:17245"/>
        <dbReference type="ChEBI" id="CHEBI:17319"/>
        <dbReference type="ChEBI" id="CHEBI:57844"/>
        <dbReference type="ChEBI" id="CHEBI:58354"/>
        <dbReference type="ChEBI" id="CHEBI:59789"/>
        <dbReference type="ChEBI" id="CHEBI:137981"/>
        <dbReference type="EC" id="4.1.99.17"/>
    </reaction>
</comment>
<comment type="cofactor">
    <cofactor evidence="1">
        <name>[4Fe-4S] cluster</name>
        <dbReference type="ChEBI" id="CHEBI:49883"/>
    </cofactor>
    <text evidence="1">Binds 1 [4Fe-4S] cluster per subunit. The cluster is coordinated with 3 cysteines and an exchangeable S-adenosyl-L-methionine.</text>
</comment>
<comment type="pathway">
    <text evidence="1">Cofactor biosynthesis; thiamine diphosphate biosynthesis.</text>
</comment>
<comment type="similarity">
    <text evidence="1">Belongs to the ThiC family.</text>
</comment>
<organism>
    <name type="scientific">Methanococcus maripaludis (strain C5 / ATCC BAA-1333)</name>
    <dbReference type="NCBI Taxonomy" id="402880"/>
    <lineage>
        <taxon>Archaea</taxon>
        <taxon>Methanobacteriati</taxon>
        <taxon>Methanobacteriota</taxon>
        <taxon>Methanomada group</taxon>
        <taxon>Methanococci</taxon>
        <taxon>Methanococcales</taxon>
        <taxon>Methanococcaceae</taxon>
        <taxon>Methanococcus</taxon>
    </lineage>
</organism>
<dbReference type="EC" id="4.1.99.17" evidence="1"/>
<dbReference type="EMBL" id="CP000609">
    <property type="protein sequence ID" value="ABO35786.1"/>
    <property type="molecule type" value="Genomic_DNA"/>
</dbReference>
<dbReference type="RefSeq" id="WP_011869236.1">
    <property type="nucleotide sequence ID" value="NC_009135.1"/>
</dbReference>
<dbReference type="SMR" id="A4G002"/>
<dbReference type="STRING" id="402880.MmarC5_1489"/>
<dbReference type="GeneID" id="4927748"/>
<dbReference type="KEGG" id="mmq:MmarC5_1489"/>
<dbReference type="eggNOG" id="arCOG02741">
    <property type="taxonomic scope" value="Archaea"/>
</dbReference>
<dbReference type="HOGENOM" id="CLU_013181_2_2_2"/>
<dbReference type="OrthoDB" id="335406at2157"/>
<dbReference type="UniPathway" id="UPA00060"/>
<dbReference type="Proteomes" id="UP000000253">
    <property type="component" value="Chromosome"/>
</dbReference>
<dbReference type="GO" id="GO:0051539">
    <property type="term" value="F:4 iron, 4 sulfur cluster binding"/>
    <property type="evidence" value="ECO:0007669"/>
    <property type="project" value="UniProtKB-KW"/>
</dbReference>
<dbReference type="GO" id="GO:0016830">
    <property type="term" value="F:carbon-carbon lyase activity"/>
    <property type="evidence" value="ECO:0007669"/>
    <property type="project" value="InterPro"/>
</dbReference>
<dbReference type="GO" id="GO:0008270">
    <property type="term" value="F:zinc ion binding"/>
    <property type="evidence" value="ECO:0007669"/>
    <property type="project" value="UniProtKB-UniRule"/>
</dbReference>
<dbReference type="GO" id="GO:0009228">
    <property type="term" value="P:thiamine biosynthetic process"/>
    <property type="evidence" value="ECO:0007669"/>
    <property type="project" value="UniProtKB-KW"/>
</dbReference>
<dbReference type="GO" id="GO:0009229">
    <property type="term" value="P:thiamine diphosphate biosynthetic process"/>
    <property type="evidence" value="ECO:0007669"/>
    <property type="project" value="UniProtKB-UniRule"/>
</dbReference>
<dbReference type="FunFam" id="3.20.20.540:FF:000001">
    <property type="entry name" value="Phosphomethylpyrimidine synthase"/>
    <property type="match status" value="1"/>
</dbReference>
<dbReference type="Gene3D" id="3.20.20.540">
    <property type="entry name" value="Radical SAM ThiC family, central domain"/>
    <property type="match status" value="1"/>
</dbReference>
<dbReference type="HAMAP" id="MF_00089">
    <property type="entry name" value="ThiC"/>
    <property type="match status" value="1"/>
</dbReference>
<dbReference type="InterPro" id="IPR037509">
    <property type="entry name" value="ThiC"/>
</dbReference>
<dbReference type="InterPro" id="IPR038521">
    <property type="entry name" value="ThiC/Bza_core_dom"/>
</dbReference>
<dbReference type="InterPro" id="IPR002817">
    <property type="entry name" value="ThiC/BzaA/B"/>
</dbReference>
<dbReference type="NCBIfam" id="NF009895">
    <property type="entry name" value="PRK13352.1"/>
    <property type="match status" value="1"/>
</dbReference>
<dbReference type="NCBIfam" id="TIGR00190">
    <property type="entry name" value="thiC"/>
    <property type="match status" value="1"/>
</dbReference>
<dbReference type="PANTHER" id="PTHR30557:SF1">
    <property type="entry name" value="PHOSPHOMETHYLPYRIMIDINE SYNTHASE, CHLOROPLASTIC"/>
    <property type="match status" value="1"/>
</dbReference>
<dbReference type="PANTHER" id="PTHR30557">
    <property type="entry name" value="THIAMINE BIOSYNTHESIS PROTEIN THIC"/>
    <property type="match status" value="1"/>
</dbReference>
<dbReference type="Pfam" id="PF01964">
    <property type="entry name" value="ThiC_Rad_SAM"/>
    <property type="match status" value="1"/>
</dbReference>
<dbReference type="SFLD" id="SFLDF00407">
    <property type="entry name" value="phosphomethylpyrimidine_syntha"/>
    <property type="match status" value="1"/>
</dbReference>
<dbReference type="SFLD" id="SFLDG01114">
    <property type="entry name" value="phosphomethylpyrimidine_syntha"/>
    <property type="match status" value="1"/>
</dbReference>
<dbReference type="SFLD" id="SFLDS00113">
    <property type="entry name" value="Radical_SAM_Phosphomethylpyrim"/>
    <property type="match status" value="1"/>
</dbReference>
<keyword id="KW-0004">4Fe-4S</keyword>
<keyword id="KW-0408">Iron</keyword>
<keyword id="KW-0411">Iron-sulfur</keyword>
<keyword id="KW-0456">Lyase</keyword>
<keyword id="KW-0479">Metal-binding</keyword>
<keyword id="KW-0949">S-adenosyl-L-methionine</keyword>
<keyword id="KW-0784">Thiamine biosynthesis</keyword>
<keyword id="KW-0862">Zinc</keyword>
<reference key="1">
    <citation type="submission" date="2007-03" db="EMBL/GenBank/DDBJ databases">
        <title>Complete sequence of chromosome of Methanococcus maripaludis C5.</title>
        <authorList>
            <consortium name="US DOE Joint Genome Institute"/>
            <person name="Copeland A."/>
            <person name="Lucas S."/>
            <person name="Lapidus A."/>
            <person name="Barry K."/>
            <person name="Glavina del Rio T."/>
            <person name="Dalin E."/>
            <person name="Tice H."/>
            <person name="Pitluck S."/>
            <person name="Chertkov O."/>
            <person name="Brettin T."/>
            <person name="Bruce D."/>
            <person name="Han C."/>
            <person name="Detter J.C."/>
            <person name="Schmutz J."/>
            <person name="Larimer F."/>
            <person name="Land M."/>
            <person name="Hauser L."/>
            <person name="Kyrpides N."/>
            <person name="Mikhailova N."/>
            <person name="Sieprawska-Lupa M."/>
            <person name="Whitman W.B."/>
            <person name="Richardson P."/>
        </authorList>
    </citation>
    <scope>NUCLEOTIDE SEQUENCE [LARGE SCALE GENOMIC DNA]</scope>
    <source>
        <strain>C5 / ATCC BAA-1333</strain>
    </source>
</reference>
<feature type="chain" id="PRO_1000004771" description="Phosphomethylpyrimidine synthase">
    <location>
        <begin position="1"/>
        <end position="426"/>
    </location>
</feature>
<feature type="binding site" evidence="1">
    <location>
        <position position="65"/>
    </location>
    <ligand>
        <name>substrate</name>
    </ligand>
</feature>
<feature type="binding site" evidence="1">
    <location>
        <position position="94"/>
    </location>
    <ligand>
        <name>substrate</name>
    </ligand>
</feature>
<feature type="binding site" evidence="1">
    <location>
        <position position="123"/>
    </location>
    <ligand>
        <name>substrate</name>
    </ligand>
</feature>
<feature type="binding site" evidence="1">
    <location>
        <position position="162"/>
    </location>
    <ligand>
        <name>substrate</name>
    </ligand>
</feature>
<feature type="binding site" evidence="1">
    <location>
        <begin position="184"/>
        <end position="186"/>
    </location>
    <ligand>
        <name>substrate</name>
    </ligand>
</feature>
<feature type="binding site" evidence="1">
    <location>
        <begin position="225"/>
        <end position="228"/>
    </location>
    <ligand>
        <name>substrate</name>
    </ligand>
</feature>
<feature type="binding site" evidence="1">
    <location>
        <position position="264"/>
    </location>
    <ligand>
        <name>substrate</name>
    </ligand>
</feature>
<feature type="binding site" evidence="1">
    <location>
        <position position="268"/>
    </location>
    <ligand>
        <name>Zn(2+)</name>
        <dbReference type="ChEBI" id="CHEBI:29105"/>
    </ligand>
</feature>
<feature type="binding site" evidence="1">
    <location>
        <position position="291"/>
    </location>
    <ligand>
        <name>substrate</name>
    </ligand>
</feature>
<feature type="binding site" evidence="1">
    <location>
        <position position="332"/>
    </location>
    <ligand>
        <name>Zn(2+)</name>
        <dbReference type="ChEBI" id="CHEBI:29105"/>
    </ligand>
</feature>
<feature type="binding site" evidence="1">
    <location>
        <position position="408"/>
    </location>
    <ligand>
        <name>[4Fe-4S] cluster</name>
        <dbReference type="ChEBI" id="CHEBI:49883"/>
        <note>4Fe-4S-S-AdoMet</note>
    </ligand>
</feature>
<feature type="binding site" evidence="1">
    <location>
        <position position="411"/>
    </location>
    <ligand>
        <name>[4Fe-4S] cluster</name>
        <dbReference type="ChEBI" id="CHEBI:49883"/>
        <note>4Fe-4S-S-AdoMet</note>
    </ligand>
</feature>
<feature type="binding site" evidence="1">
    <location>
        <position position="415"/>
    </location>
    <ligand>
        <name>[4Fe-4S] cluster</name>
        <dbReference type="ChEBI" id="CHEBI:49883"/>
        <note>4Fe-4S-S-AdoMet</note>
    </ligand>
</feature>
<gene>
    <name evidence="1" type="primary">thiC</name>
    <name type="ordered locus">MmarC5_1489</name>
</gene>